<sequence length="371" mass="42116">MPHHYILTLFGLLPVATNISTWWNFGSMLLTCLVLQVLTGFFLAVHYTANINLAFSSIVHITRDVPYGWMMQNLHAIGASMFFICIYIHIARGLYYGSYLNKETWMSGITLLITLMATALFGYVLPWGQMSFWAATVITNLLTAVPYLGTSLTTWLWGGFAINDPTLTRFFALHFILPFAIISLSSLHIILLHEEGSSNPLGTNPDIDKIPFHPYHSHKDLLLLTLMMMFLFIIVSFFPDIFNDPDNFSKANPLVTPQHIKPEWYFLFAYGILRSIPNKLGGALALVASIMILFTTPFTHTANLRPMTFRPLSQLMFWTLVSTFITITWAATKPVEPPFIAISQVTSMLYFTFFLSIPILGWMENKMMNTP</sequence>
<proteinExistence type="inferred from homology"/>
<feature type="chain" id="PRO_0000061122" description="Cytochrome b">
    <location>
        <begin position="1"/>
        <end position="371"/>
    </location>
</feature>
<feature type="transmembrane region" description="Helical" evidence="2">
    <location>
        <begin position="25"/>
        <end position="45"/>
    </location>
</feature>
<feature type="transmembrane region" description="Helical" evidence="2">
    <location>
        <begin position="69"/>
        <end position="90"/>
    </location>
</feature>
<feature type="transmembrane region" description="Helical" evidence="2">
    <location>
        <begin position="105"/>
        <end position="125"/>
    </location>
</feature>
<feature type="transmembrane region" description="Helical" evidence="2">
    <location>
        <begin position="170"/>
        <end position="190"/>
    </location>
</feature>
<feature type="transmembrane region" description="Helical" evidence="2">
    <location>
        <begin position="218"/>
        <end position="238"/>
    </location>
</feature>
<feature type="transmembrane region" description="Helical" evidence="2">
    <location>
        <begin position="280"/>
        <end position="300"/>
    </location>
</feature>
<feature type="transmembrane region" description="Helical" evidence="2">
    <location>
        <begin position="312"/>
        <end position="332"/>
    </location>
</feature>
<feature type="transmembrane region" description="Helical" evidence="2">
    <location>
        <begin position="339"/>
        <end position="358"/>
    </location>
</feature>
<feature type="binding site" description="axial binding residue" evidence="2">
    <location>
        <position position="75"/>
    </location>
    <ligand>
        <name>heme b</name>
        <dbReference type="ChEBI" id="CHEBI:60344"/>
        <label>b562</label>
    </ligand>
    <ligandPart>
        <name>Fe</name>
        <dbReference type="ChEBI" id="CHEBI:18248"/>
    </ligandPart>
</feature>
<feature type="binding site" description="axial binding residue" evidence="2">
    <location>
        <position position="89"/>
    </location>
    <ligand>
        <name>heme b</name>
        <dbReference type="ChEBI" id="CHEBI:60344"/>
        <label>b566</label>
    </ligand>
    <ligandPart>
        <name>Fe</name>
        <dbReference type="ChEBI" id="CHEBI:18248"/>
    </ligandPart>
</feature>
<feature type="binding site" description="axial binding residue" evidence="2">
    <location>
        <position position="174"/>
    </location>
    <ligand>
        <name>heme b</name>
        <dbReference type="ChEBI" id="CHEBI:60344"/>
        <label>b562</label>
    </ligand>
    <ligandPart>
        <name>Fe</name>
        <dbReference type="ChEBI" id="CHEBI:18248"/>
    </ligandPart>
</feature>
<feature type="binding site" description="axial binding residue" evidence="2">
    <location>
        <position position="188"/>
    </location>
    <ligand>
        <name>heme b</name>
        <dbReference type="ChEBI" id="CHEBI:60344"/>
        <label>b566</label>
    </ligand>
    <ligandPart>
        <name>Fe</name>
        <dbReference type="ChEBI" id="CHEBI:18248"/>
    </ligandPart>
</feature>
<feature type="binding site" evidence="2">
    <location>
        <position position="193"/>
    </location>
    <ligand>
        <name>a ubiquinone</name>
        <dbReference type="ChEBI" id="CHEBI:16389"/>
    </ligand>
</feature>
<feature type="sequence variant">
    <original>L</original>
    <variation>F</variation>
    <location>
        <position position="120"/>
    </location>
</feature>
<reference key="1">
    <citation type="thesis" date="1997" institute="Queen's University / Kingston" country="Canada">
        <title>Hic Sunt Serpentes -- molecular phylogenetics and the Boidae (Serpentes: Booidea).</title>
        <authorList>
            <person name="Campbell B.N."/>
        </authorList>
    </citation>
    <scope>NUCLEOTIDE SEQUENCE [GENOMIC DNA]</scope>
</reference>
<dbReference type="EMBL" id="U69841">
    <property type="protein sequence ID" value="AAC01875.1"/>
    <property type="molecule type" value="Genomic_DNA"/>
</dbReference>
<dbReference type="EMBL" id="U69842">
    <property type="protein sequence ID" value="AAC01876.1"/>
    <property type="molecule type" value="Genomic_DNA"/>
</dbReference>
<dbReference type="SMR" id="O48096"/>
<dbReference type="GO" id="GO:0005743">
    <property type="term" value="C:mitochondrial inner membrane"/>
    <property type="evidence" value="ECO:0007669"/>
    <property type="project" value="UniProtKB-SubCell"/>
</dbReference>
<dbReference type="GO" id="GO:0045275">
    <property type="term" value="C:respiratory chain complex III"/>
    <property type="evidence" value="ECO:0007669"/>
    <property type="project" value="InterPro"/>
</dbReference>
<dbReference type="GO" id="GO:0046872">
    <property type="term" value="F:metal ion binding"/>
    <property type="evidence" value="ECO:0007669"/>
    <property type="project" value="UniProtKB-KW"/>
</dbReference>
<dbReference type="GO" id="GO:0008121">
    <property type="term" value="F:ubiquinol-cytochrome-c reductase activity"/>
    <property type="evidence" value="ECO:0007669"/>
    <property type="project" value="InterPro"/>
</dbReference>
<dbReference type="GO" id="GO:0006122">
    <property type="term" value="P:mitochondrial electron transport, ubiquinol to cytochrome c"/>
    <property type="evidence" value="ECO:0007669"/>
    <property type="project" value="TreeGrafter"/>
</dbReference>
<dbReference type="CDD" id="cd00290">
    <property type="entry name" value="cytochrome_b_C"/>
    <property type="match status" value="1"/>
</dbReference>
<dbReference type="CDD" id="cd00284">
    <property type="entry name" value="Cytochrome_b_N"/>
    <property type="match status" value="1"/>
</dbReference>
<dbReference type="Gene3D" id="1.20.810.10">
    <property type="entry name" value="Cytochrome Bc1 Complex, Chain C"/>
    <property type="match status" value="1"/>
</dbReference>
<dbReference type="InterPro" id="IPR005798">
    <property type="entry name" value="Cyt_b/b6_C"/>
</dbReference>
<dbReference type="InterPro" id="IPR036150">
    <property type="entry name" value="Cyt_b/b6_C_sf"/>
</dbReference>
<dbReference type="InterPro" id="IPR005797">
    <property type="entry name" value="Cyt_b/b6_N"/>
</dbReference>
<dbReference type="InterPro" id="IPR027387">
    <property type="entry name" value="Cytb/b6-like_sf"/>
</dbReference>
<dbReference type="InterPro" id="IPR030689">
    <property type="entry name" value="Cytochrome_b"/>
</dbReference>
<dbReference type="InterPro" id="IPR048260">
    <property type="entry name" value="Cytochrome_b_C_euk/bac"/>
</dbReference>
<dbReference type="InterPro" id="IPR048259">
    <property type="entry name" value="Cytochrome_b_N_euk/bac"/>
</dbReference>
<dbReference type="InterPro" id="IPR016174">
    <property type="entry name" value="Di-haem_cyt_TM"/>
</dbReference>
<dbReference type="PANTHER" id="PTHR19271">
    <property type="entry name" value="CYTOCHROME B"/>
    <property type="match status" value="1"/>
</dbReference>
<dbReference type="PANTHER" id="PTHR19271:SF16">
    <property type="entry name" value="CYTOCHROME B"/>
    <property type="match status" value="1"/>
</dbReference>
<dbReference type="Pfam" id="PF00032">
    <property type="entry name" value="Cytochrom_B_C"/>
    <property type="match status" value="1"/>
</dbReference>
<dbReference type="Pfam" id="PF00033">
    <property type="entry name" value="Cytochrome_B"/>
    <property type="match status" value="1"/>
</dbReference>
<dbReference type="PIRSF" id="PIRSF038885">
    <property type="entry name" value="COB"/>
    <property type="match status" value="1"/>
</dbReference>
<dbReference type="SUPFAM" id="SSF81648">
    <property type="entry name" value="a domain/subunit of cytochrome bc1 complex (Ubiquinol-cytochrome c reductase)"/>
    <property type="match status" value="1"/>
</dbReference>
<dbReference type="SUPFAM" id="SSF81342">
    <property type="entry name" value="Transmembrane di-heme cytochromes"/>
    <property type="match status" value="1"/>
</dbReference>
<dbReference type="PROSITE" id="PS51003">
    <property type="entry name" value="CYTB_CTER"/>
    <property type="match status" value="1"/>
</dbReference>
<dbReference type="PROSITE" id="PS51002">
    <property type="entry name" value="CYTB_NTER"/>
    <property type="match status" value="1"/>
</dbReference>
<comment type="function">
    <text evidence="2">Component of the ubiquinol-cytochrome c reductase complex (complex III or cytochrome b-c1 complex) that is part of the mitochondrial respiratory chain. The b-c1 complex mediates electron transfer from ubiquinol to cytochrome c. Contributes to the generation of a proton gradient across the mitochondrial membrane that is then used for ATP synthesis.</text>
</comment>
<comment type="cofactor">
    <cofactor evidence="2">
        <name>heme b</name>
        <dbReference type="ChEBI" id="CHEBI:60344"/>
    </cofactor>
    <text evidence="2">Binds 2 heme b groups non-covalently.</text>
</comment>
<comment type="subunit">
    <text evidence="2">The cytochrome bc1 complex contains 3 respiratory subunits (MT-CYB, CYC1 and UQCRFS1), 2 core proteins (UQCRC1 and UQCRC2) and probably 6 low-molecular weight proteins.</text>
</comment>
<comment type="subcellular location">
    <subcellularLocation>
        <location evidence="2">Mitochondrion inner membrane</location>
        <topology evidence="2">Multi-pass membrane protein</topology>
    </subcellularLocation>
</comment>
<comment type="miscellaneous">
    <text evidence="1">Heme 1 (or BL or b562) is low-potential and absorbs at about 562 nm, and heme 2 (or BH or b566) is high-potential and absorbs at about 566 nm.</text>
</comment>
<comment type="similarity">
    <text evidence="3 4">Belongs to the cytochrome b family.</text>
</comment>
<comment type="caution">
    <text evidence="2">The full-length protein contains only eight transmembrane helices, not nine as predicted by bioinformatics tools.</text>
</comment>
<gene>
    <name type="primary">MT-CYB</name>
    <name type="synonym">COB</name>
    <name type="synonym">CYTB</name>
    <name type="synonym">MTCYB</name>
</gene>
<protein>
    <recommendedName>
        <fullName>Cytochrome b</fullName>
    </recommendedName>
    <alternativeName>
        <fullName>Complex III subunit 3</fullName>
    </alternativeName>
    <alternativeName>
        <fullName>Complex III subunit III</fullName>
    </alternativeName>
    <alternativeName>
        <fullName>Cytochrome b-c1 complex subunit 3</fullName>
    </alternativeName>
    <alternativeName>
        <fullName>Ubiquinol-cytochrome-c reductase complex cytochrome b subunit</fullName>
    </alternativeName>
</protein>
<keyword id="KW-0249">Electron transport</keyword>
<keyword id="KW-0349">Heme</keyword>
<keyword id="KW-0408">Iron</keyword>
<keyword id="KW-0472">Membrane</keyword>
<keyword id="KW-0479">Metal-binding</keyword>
<keyword id="KW-0496">Mitochondrion</keyword>
<keyword id="KW-0999">Mitochondrion inner membrane</keyword>
<keyword id="KW-0679">Respiratory chain</keyword>
<keyword id="KW-0812">Transmembrane</keyword>
<keyword id="KW-1133">Transmembrane helix</keyword>
<keyword id="KW-0813">Transport</keyword>
<keyword id="KW-0830">Ubiquinone</keyword>
<organism>
    <name type="scientific">Liasis olivaceus</name>
    <name type="common">Olive python</name>
    <name type="synonym">Morelia olivacea</name>
    <dbReference type="NCBI Taxonomy" id="283338"/>
    <lineage>
        <taxon>Eukaryota</taxon>
        <taxon>Metazoa</taxon>
        <taxon>Chordata</taxon>
        <taxon>Craniata</taxon>
        <taxon>Vertebrata</taxon>
        <taxon>Euteleostomi</taxon>
        <taxon>Lepidosauria</taxon>
        <taxon>Squamata</taxon>
        <taxon>Bifurcata</taxon>
        <taxon>Unidentata</taxon>
        <taxon>Episquamata</taxon>
        <taxon>Toxicofera</taxon>
        <taxon>Serpentes</taxon>
        <taxon>Henophidia</taxon>
        <taxon>Pythonidae</taxon>
        <taxon>Liasis</taxon>
    </lineage>
</organism>
<accession>O48096</accession>
<accession>O48097</accession>
<evidence type="ECO:0000250" key="1"/>
<evidence type="ECO:0000250" key="2">
    <source>
        <dbReference type="UniProtKB" id="P00157"/>
    </source>
</evidence>
<evidence type="ECO:0000255" key="3">
    <source>
        <dbReference type="PROSITE-ProRule" id="PRU00967"/>
    </source>
</evidence>
<evidence type="ECO:0000255" key="4">
    <source>
        <dbReference type="PROSITE-ProRule" id="PRU00968"/>
    </source>
</evidence>
<geneLocation type="mitochondrion"/>
<name>CYB_LIAOV</name>